<organism>
    <name type="scientific">Glechoma hederacea</name>
    <name type="common">Ground-ivy</name>
    <dbReference type="NCBI Taxonomy" id="28509"/>
    <lineage>
        <taxon>Eukaryota</taxon>
        <taxon>Viridiplantae</taxon>
        <taxon>Streptophyta</taxon>
        <taxon>Embryophyta</taxon>
        <taxon>Tracheophyta</taxon>
        <taxon>Spermatophyta</taxon>
        <taxon>Magnoliopsida</taxon>
        <taxon>eudicotyledons</taxon>
        <taxon>Gunneridae</taxon>
        <taxon>Pentapetalae</taxon>
        <taxon>asterids</taxon>
        <taxon>lamiids</taxon>
        <taxon>Lamiales</taxon>
        <taxon>Lamiaceae</taxon>
        <taxon>Nepetoideae</taxon>
        <taxon>Mentheae</taxon>
        <taxon>Nepetinae</taxon>
        <taxon>Glechoma</taxon>
    </lineage>
</organism>
<protein>
    <recommendedName>
        <fullName evidence="10">Vanillin synthase</fullName>
        <shortName evidence="10">GhVAN</shortName>
        <ecNumber evidence="9">4.1.2.-</ecNumber>
    </recommendedName>
</protein>
<comment type="function">
    <text evidence="9">Involved in the biosynthesis of vanillin and derivative natural products (PubMed:24941968). Catalyzes the double carbon bond cleavage of ferulic acid to vanillin and of respective glucosides (PubMed:24941968).</text>
</comment>
<comment type="catalytic activity">
    <reaction evidence="9">
        <text>(E)-ferulate + H2O = vanillin + acetate</text>
        <dbReference type="Rhea" id="RHEA:76491"/>
        <dbReference type="ChEBI" id="CHEBI:15377"/>
        <dbReference type="ChEBI" id="CHEBI:18346"/>
        <dbReference type="ChEBI" id="CHEBI:29749"/>
        <dbReference type="ChEBI" id="CHEBI:30089"/>
    </reaction>
    <physiologicalReaction direction="left-to-right" evidence="9">
        <dbReference type="Rhea" id="RHEA:76492"/>
    </physiologicalReaction>
</comment>
<comment type="catalytic activity">
    <reaction evidence="9">
        <text>4-O-beta-D-glucosyl-trans-ferulate + H2O = 4-O-beta-D-glucosyl-vanillin + acetate</text>
        <dbReference type="Rhea" id="RHEA:76503"/>
        <dbReference type="ChEBI" id="CHEBI:15377"/>
        <dbReference type="ChEBI" id="CHEBI:30089"/>
        <dbReference type="ChEBI" id="CHEBI:141767"/>
        <dbReference type="ChEBI" id="CHEBI:179508"/>
    </reaction>
    <physiologicalReaction direction="left-to-right" evidence="9">
        <dbReference type="Rhea" id="RHEA:76504"/>
    </physiologicalReaction>
</comment>
<comment type="pathway">
    <text evidence="9">Aromatic compound metabolism; phenylpropanoid biosynthesis.</text>
</comment>
<comment type="similarity">
    <text evidence="6 7 8">Belongs to the peptidase C1 family.</text>
</comment>
<name>VANSY_GLEHE</name>
<dbReference type="EC" id="4.1.2.-" evidence="9"/>
<dbReference type="EMBL" id="KJ775791">
    <property type="protein sequence ID" value="AID23868.1"/>
    <property type="molecule type" value="mRNA"/>
</dbReference>
<dbReference type="SMR" id="A0A068CNX1"/>
<dbReference type="KEGG" id="ag:AID23868"/>
<dbReference type="UniPathway" id="UPA00711"/>
<dbReference type="GO" id="GO:0008234">
    <property type="term" value="F:cysteine-type peptidase activity"/>
    <property type="evidence" value="ECO:0007669"/>
    <property type="project" value="InterPro"/>
</dbReference>
<dbReference type="GO" id="GO:0050547">
    <property type="term" value="F:feruloyl-CoA hydratase/lyase activity"/>
    <property type="evidence" value="ECO:0000314"/>
    <property type="project" value="UniProtKB"/>
</dbReference>
<dbReference type="GO" id="GO:0009699">
    <property type="term" value="P:phenylpropanoid biosynthetic process"/>
    <property type="evidence" value="ECO:0000314"/>
    <property type="project" value="UniProtKB"/>
</dbReference>
<dbReference type="GO" id="GO:0006508">
    <property type="term" value="P:proteolysis"/>
    <property type="evidence" value="ECO:0007669"/>
    <property type="project" value="InterPro"/>
</dbReference>
<dbReference type="CDD" id="cd02248">
    <property type="entry name" value="Peptidase_C1A"/>
    <property type="match status" value="1"/>
</dbReference>
<dbReference type="FunFam" id="3.90.70.10:FF:000039">
    <property type="entry name" value="Cysteine proteinase 2, putative"/>
    <property type="match status" value="1"/>
</dbReference>
<dbReference type="Gene3D" id="3.90.70.10">
    <property type="entry name" value="Cysteine proteinases"/>
    <property type="match status" value="1"/>
</dbReference>
<dbReference type="InterPro" id="IPR038765">
    <property type="entry name" value="Papain-like_cys_pep_sf"/>
</dbReference>
<dbReference type="InterPro" id="IPR025661">
    <property type="entry name" value="Pept_asp_AS"/>
</dbReference>
<dbReference type="InterPro" id="IPR000169">
    <property type="entry name" value="Pept_cys_AS"/>
</dbReference>
<dbReference type="InterPro" id="IPR025660">
    <property type="entry name" value="Pept_his_AS"/>
</dbReference>
<dbReference type="InterPro" id="IPR013128">
    <property type="entry name" value="Peptidase_C1A"/>
</dbReference>
<dbReference type="InterPro" id="IPR000668">
    <property type="entry name" value="Peptidase_C1A_C"/>
</dbReference>
<dbReference type="InterPro" id="IPR039417">
    <property type="entry name" value="Peptidase_C1A_papain-like"/>
</dbReference>
<dbReference type="InterPro" id="IPR013201">
    <property type="entry name" value="Prot_inhib_I29"/>
</dbReference>
<dbReference type="PANTHER" id="PTHR12411">
    <property type="entry name" value="CYSTEINE PROTEASE FAMILY C1-RELATED"/>
    <property type="match status" value="1"/>
</dbReference>
<dbReference type="Pfam" id="PF08246">
    <property type="entry name" value="Inhibitor_I29"/>
    <property type="match status" value="1"/>
</dbReference>
<dbReference type="Pfam" id="PF00112">
    <property type="entry name" value="Peptidase_C1"/>
    <property type="match status" value="1"/>
</dbReference>
<dbReference type="PRINTS" id="PR00705">
    <property type="entry name" value="PAPAIN"/>
</dbReference>
<dbReference type="SMART" id="SM00848">
    <property type="entry name" value="Inhibitor_I29"/>
    <property type="match status" value="1"/>
</dbReference>
<dbReference type="SMART" id="SM00645">
    <property type="entry name" value="Pept_C1"/>
    <property type="match status" value="1"/>
</dbReference>
<dbReference type="SUPFAM" id="SSF54001">
    <property type="entry name" value="Cysteine proteinases"/>
    <property type="match status" value="1"/>
</dbReference>
<dbReference type="PROSITE" id="PS51257">
    <property type="entry name" value="PROKAR_LIPOPROTEIN"/>
    <property type="match status" value="1"/>
</dbReference>
<dbReference type="PROSITE" id="PS00640">
    <property type="entry name" value="THIOL_PROTEASE_ASN"/>
    <property type="match status" value="1"/>
</dbReference>
<dbReference type="PROSITE" id="PS00139">
    <property type="entry name" value="THIOL_PROTEASE_CYS"/>
    <property type="match status" value="1"/>
</dbReference>
<dbReference type="PROSITE" id="PS00639">
    <property type="entry name" value="THIOL_PROTEASE_HIS"/>
    <property type="match status" value="1"/>
</dbReference>
<evidence type="ECO:0000250" key="1">
    <source>
        <dbReference type="UniProtKB" id="P00785"/>
    </source>
</evidence>
<evidence type="ECO:0000250" key="2">
    <source>
        <dbReference type="UniProtKB" id="P07858"/>
    </source>
</evidence>
<evidence type="ECO:0000250" key="3">
    <source>
        <dbReference type="UniProtKB" id="P25250"/>
    </source>
</evidence>
<evidence type="ECO:0000255" key="4"/>
<evidence type="ECO:0000255" key="5">
    <source>
        <dbReference type="PROSITE-ProRule" id="PRU00498"/>
    </source>
</evidence>
<evidence type="ECO:0000255" key="6">
    <source>
        <dbReference type="PROSITE-ProRule" id="PRU10088"/>
    </source>
</evidence>
<evidence type="ECO:0000255" key="7">
    <source>
        <dbReference type="PROSITE-ProRule" id="PRU10089"/>
    </source>
</evidence>
<evidence type="ECO:0000255" key="8">
    <source>
        <dbReference type="PROSITE-ProRule" id="PRU10090"/>
    </source>
</evidence>
<evidence type="ECO:0000269" key="9">
    <source>
    </source>
</evidence>
<evidence type="ECO:0000303" key="10">
    <source>
    </source>
</evidence>
<proteinExistence type="evidence at protein level"/>
<accession>A0A068CNX1</accession>
<gene>
    <name evidence="10" type="primary">VAN</name>
</gene>
<sequence length="358" mass="38811">MARLLLLLVGVLIACAAGARAGSEFLAEDNPIRQVVDGMHELESSILKAVGNSRRAFSFARFAHRYGKSYESSEEIQKRFQVYSENLRMIRSHNKKGLSYSMGVNEFSDLTWDEFKKHRLGAAQNCSATRRGNHKLTSAILPDSKDWRESGIVSPVKSQGSCGSCWTFSSTGALEAAYAQAFGKGISLSEQQLVDCAGAFNNFGCNGGLPSQAFEYIKYNGGLMTEEAYPYTGHDGECKYSSENAAVQVLDSVNITLGAEDELKHAVALVRPVSVAFEVVDGFRSYNGGVYTSTTCGSDPMDVNHAVLAVGYGVEGGVPYWLIKNSWGADWGDQGYFKMEMGKNMCGVATCASYPVVA</sequence>
<keyword id="KW-1015">Disulfide bond</keyword>
<keyword id="KW-0325">Glycoprotein</keyword>
<keyword id="KW-0456">Lyase</keyword>
<keyword id="KW-0732">Signal</keyword>
<reference key="1">
    <citation type="journal article" date="2014" name="Nat. Commun.">
        <title>Vanillin formation from ferulic acid in Vanilla planifolia is catalysed by a single enzyme.</title>
        <authorList>
            <person name="Gallage N.J."/>
            <person name="Hansen E.H."/>
            <person name="Kannangara R."/>
            <person name="Olsen C.E."/>
            <person name="Motawia M.S."/>
            <person name="Joergensen K."/>
            <person name="Holme I."/>
            <person name="Hebelstrup K."/>
            <person name="Grisoni M."/>
            <person name="Moeller B.L."/>
        </authorList>
    </citation>
    <scope>NUCLEOTIDE SEQUENCE [MRNA]</scope>
    <scope>FUNCTION</scope>
    <scope>CATALYTIC ACTIVITY</scope>
    <scope>PATHWAY</scope>
</reference>
<feature type="signal peptide" evidence="4">
    <location>
        <begin position="1"/>
        <end position="21"/>
    </location>
</feature>
<feature type="propeptide" id="PRO_0000458827" description="Activation peptide" evidence="1">
    <location>
        <begin position="22"/>
        <end position="140"/>
    </location>
</feature>
<feature type="chain" id="PRO_5018663925" description="Vanillin synthase">
    <location>
        <begin position="141"/>
        <end position="358"/>
    </location>
</feature>
<feature type="active site" evidence="6">
    <location>
        <position position="165"/>
    </location>
</feature>
<feature type="active site" evidence="7">
    <location>
        <position position="305"/>
    </location>
</feature>
<feature type="active site" evidence="8">
    <location>
        <position position="325"/>
    </location>
</feature>
<feature type="glycosylation site" description="N-linked (GlcNAc...) asparagine" evidence="5">
    <location>
        <position position="125"/>
    </location>
</feature>
<feature type="glycosylation site" description="N-linked (GlcNAc...) asparagine" evidence="5">
    <location>
        <position position="254"/>
    </location>
</feature>
<feature type="disulfide bond" evidence="2">
    <location>
        <begin position="162"/>
        <end position="205"/>
    </location>
</feature>
<feature type="disulfide bond" evidence="3">
    <location>
        <begin position="196"/>
        <end position="238"/>
    </location>
</feature>
<feature type="disulfide bond" evidence="3">
    <location>
        <begin position="296"/>
        <end position="346"/>
    </location>
</feature>